<organism>
    <name type="scientific">Shewanella sediminis (strain HAW-EB3)</name>
    <dbReference type="NCBI Taxonomy" id="425104"/>
    <lineage>
        <taxon>Bacteria</taxon>
        <taxon>Pseudomonadati</taxon>
        <taxon>Pseudomonadota</taxon>
        <taxon>Gammaproteobacteria</taxon>
        <taxon>Alteromonadales</taxon>
        <taxon>Shewanellaceae</taxon>
        <taxon>Shewanella</taxon>
    </lineage>
</organism>
<comment type="function">
    <text evidence="1">Key component of the proton channel; it plays a direct role in the translocation of protons across the membrane.</text>
</comment>
<comment type="subunit">
    <text evidence="1">F-type ATPases have 2 components, CF(1) - the catalytic core - and CF(0) - the membrane proton channel. CF(1) has five subunits: alpha(3), beta(3), gamma(1), delta(1), epsilon(1). CF(0) has three main subunits: a(1), b(2) and c(9-12). The alpha and beta chains form an alternating ring which encloses part of the gamma chain. CF(1) is attached to CF(0) by a central stalk formed by the gamma and epsilon chains, while a peripheral stalk is formed by the delta and b chains.</text>
</comment>
<comment type="subcellular location">
    <subcellularLocation>
        <location evidence="1">Cell inner membrane</location>
        <topology evidence="1">Multi-pass membrane protein</topology>
    </subcellularLocation>
</comment>
<comment type="similarity">
    <text evidence="1">Belongs to the ATPase A chain family.</text>
</comment>
<evidence type="ECO:0000255" key="1">
    <source>
        <dbReference type="HAMAP-Rule" id="MF_01393"/>
    </source>
</evidence>
<gene>
    <name evidence="1" type="primary">atpB</name>
    <name type="ordered locus">Ssed_4492</name>
</gene>
<feature type="chain" id="PRO_0000362458" description="ATP synthase subunit a">
    <location>
        <begin position="1"/>
        <end position="264"/>
    </location>
</feature>
<feature type="transmembrane region" description="Helical" evidence="1">
    <location>
        <begin position="29"/>
        <end position="49"/>
    </location>
</feature>
<feature type="transmembrane region" description="Helical" evidence="1">
    <location>
        <begin position="89"/>
        <end position="109"/>
    </location>
</feature>
<feature type="transmembrane region" description="Helical" evidence="1">
    <location>
        <begin position="134"/>
        <end position="154"/>
    </location>
</feature>
<feature type="transmembrane region" description="Helical" evidence="1">
    <location>
        <begin position="177"/>
        <end position="197"/>
    </location>
</feature>
<feature type="transmembrane region" description="Helical" evidence="1">
    <location>
        <begin position="208"/>
        <end position="228"/>
    </location>
</feature>
<feature type="transmembrane region" description="Helical" evidence="1">
    <location>
        <begin position="235"/>
        <end position="255"/>
    </location>
</feature>
<dbReference type="EMBL" id="CP000821">
    <property type="protein sequence ID" value="ABV39094.1"/>
    <property type="molecule type" value="Genomic_DNA"/>
</dbReference>
<dbReference type="RefSeq" id="WP_012144820.1">
    <property type="nucleotide sequence ID" value="NC_009831.1"/>
</dbReference>
<dbReference type="SMR" id="A8G1X1"/>
<dbReference type="STRING" id="425104.Ssed_4492"/>
<dbReference type="KEGG" id="sse:Ssed_4492"/>
<dbReference type="eggNOG" id="COG0356">
    <property type="taxonomic scope" value="Bacteria"/>
</dbReference>
<dbReference type="HOGENOM" id="CLU_041018_1_0_6"/>
<dbReference type="OrthoDB" id="9789241at2"/>
<dbReference type="Proteomes" id="UP000002015">
    <property type="component" value="Chromosome"/>
</dbReference>
<dbReference type="GO" id="GO:0005886">
    <property type="term" value="C:plasma membrane"/>
    <property type="evidence" value="ECO:0007669"/>
    <property type="project" value="UniProtKB-SubCell"/>
</dbReference>
<dbReference type="GO" id="GO:0045259">
    <property type="term" value="C:proton-transporting ATP synthase complex"/>
    <property type="evidence" value="ECO:0007669"/>
    <property type="project" value="UniProtKB-KW"/>
</dbReference>
<dbReference type="GO" id="GO:0046933">
    <property type="term" value="F:proton-transporting ATP synthase activity, rotational mechanism"/>
    <property type="evidence" value="ECO:0007669"/>
    <property type="project" value="UniProtKB-UniRule"/>
</dbReference>
<dbReference type="GO" id="GO:0042777">
    <property type="term" value="P:proton motive force-driven plasma membrane ATP synthesis"/>
    <property type="evidence" value="ECO:0007669"/>
    <property type="project" value="TreeGrafter"/>
</dbReference>
<dbReference type="CDD" id="cd00310">
    <property type="entry name" value="ATP-synt_Fo_a_6"/>
    <property type="match status" value="1"/>
</dbReference>
<dbReference type="FunFam" id="1.20.120.220:FF:000002">
    <property type="entry name" value="ATP synthase subunit a"/>
    <property type="match status" value="1"/>
</dbReference>
<dbReference type="Gene3D" id="1.20.120.220">
    <property type="entry name" value="ATP synthase, F0 complex, subunit A"/>
    <property type="match status" value="1"/>
</dbReference>
<dbReference type="HAMAP" id="MF_01393">
    <property type="entry name" value="ATP_synth_a_bact"/>
    <property type="match status" value="1"/>
</dbReference>
<dbReference type="InterPro" id="IPR045082">
    <property type="entry name" value="ATP_syn_F0_a_bact/chloroplast"/>
</dbReference>
<dbReference type="InterPro" id="IPR000568">
    <property type="entry name" value="ATP_synth_F0_asu"/>
</dbReference>
<dbReference type="InterPro" id="IPR023011">
    <property type="entry name" value="ATP_synth_F0_asu_AS"/>
</dbReference>
<dbReference type="InterPro" id="IPR035908">
    <property type="entry name" value="F0_ATP_A_sf"/>
</dbReference>
<dbReference type="NCBIfam" id="TIGR01131">
    <property type="entry name" value="ATP_synt_6_or_A"/>
    <property type="match status" value="1"/>
</dbReference>
<dbReference type="NCBIfam" id="NF004477">
    <property type="entry name" value="PRK05815.1-1"/>
    <property type="match status" value="1"/>
</dbReference>
<dbReference type="PANTHER" id="PTHR42823">
    <property type="entry name" value="ATP SYNTHASE SUBUNIT A, CHLOROPLASTIC"/>
    <property type="match status" value="1"/>
</dbReference>
<dbReference type="PANTHER" id="PTHR42823:SF3">
    <property type="entry name" value="ATP SYNTHASE SUBUNIT A, CHLOROPLASTIC"/>
    <property type="match status" value="1"/>
</dbReference>
<dbReference type="Pfam" id="PF00119">
    <property type="entry name" value="ATP-synt_A"/>
    <property type="match status" value="1"/>
</dbReference>
<dbReference type="PRINTS" id="PR00123">
    <property type="entry name" value="ATPASEA"/>
</dbReference>
<dbReference type="SUPFAM" id="SSF81336">
    <property type="entry name" value="F1F0 ATP synthase subunit A"/>
    <property type="match status" value="1"/>
</dbReference>
<dbReference type="PROSITE" id="PS00449">
    <property type="entry name" value="ATPASE_A"/>
    <property type="match status" value="1"/>
</dbReference>
<keyword id="KW-0066">ATP synthesis</keyword>
<keyword id="KW-0997">Cell inner membrane</keyword>
<keyword id="KW-1003">Cell membrane</keyword>
<keyword id="KW-0138">CF(0)</keyword>
<keyword id="KW-0375">Hydrogen ion transport</keyword>
<keyword id="KW-0406">Ion transport</keyword>
<keyword id="KW-0472">Membrane</keyword>
<keyword id="KW-1185">Reference proteome</keyword>
<keyword id="KW-0812">Transmembrane</keyword>
<keyword id="KW-1133">Transmembrane helix</keyword>
<keyword id="KW-0813">Transport</keyword>
<name>ATP6_SHESH</name>
<reference key="1">
    <citation type="submission" date="2007-08" db="EMBL/GenBank/DDBJ databases">
        <title>Complete sequence of Shewanella sediminis HAW-EB3.</title>
        <authorList>
            <consortium name="US DOE Joint Genome Institute"/>
            <person name="Copeland A."/>
            <person name="Lucas S."/>
            <person name="Lapidus A."/>
            <person name="Barry K."/>
            <person name="Glavina del Rio T."/>
            <person name="Dalin E."/>
            <person name="Tice H."/>
            <person name="Pitluck S."/>
            <person name="Chertkov O."/>
            <person name="Brettin T."/>
            <person name="Bruce D."/>
            <person name="Detter J.C."/>
            <person name="Han C."/>
            <person name="Schmutz J."/>
            <person name="Larimer F."/>
            <person name="Land M."/>
            <person name="Hauser L."/>
            <person name="Kyrpides N."/>
            <person name="Kim E."/>
            <person name="Zhao J.-S."/>
            <person name="Richardson P."/>
        </authorList>
    </citation>
    <scope>NUCLEOTIDE SEQUENCE [LARGE SCALE GENOMIC DNA]</scope>
    <source>
        <strain>HAW-EB3</strain>
    </source>
</reference>
<protein>
    <recommendedName>
        <fullName evidence="1">ATP synthase subunit a</fullName>
    </recommendedName>
    <alternativeName>
        <fullName evidence="1">ATP synthase F0 sector subunit a</fullName>
    </alternativeName>
    <alternativeName>
        <fullName evidence="1">F-ATPase subunit 6</fullName>
    </alternativeName>
</protein>
<sequence length="264" mass="29410">MAATGEALTPQGYIQHHLTNLSVGEGFWTWHIDSLLFSVGLGVLFLWLFRSVGKKATTGVPGKLQCFVEMIIEFVDSSVKETFHGRNPVIAPLALTIFVWVFMMNFMDMVPVDWIPSLAAAAGIPYMKVVPTTDLNITFSMAIGVFLLIIYYSIKVKGISGFVKELTMQPFNHWAMIPVNFLLETVTLIAKPISLALRLFGNLYAGELIFILIALMYGANMALSALGVTLQLGWLIFHILVITLQAFIFMMLTIVYLSMAHEDH</sequence>
<proteinExistence type="inferred from homology"/>
<accession>A8G1X1</accession>